<reference key="1">
    <citation type="journal article" date="1990" name="Virology">
        <title>Identification and DNA sequence of the Shope fibroma virus DNA topoisomerase gene.</title>
        <authorList>
            <person name="Upton C."/>
            <person name="Opgenorth A."/>
            <person name="Traktman P."/>
            <person name="McFadden G."/>
        </authorList>
    </citation>
    <scope>NUCLEOTIDE SEQUENCE [GENOMIC DNA]</scope>
</reference>
<reference key="2">
    <citation type="journal article" date="1991" name="Virology">
        <title>Sequence and analysis of a portion of the genomes of Shope fibroma virus and malignant rabbit fibroma virus that is important for viral replication in lymphocytes.</title>
        <authorList>
            <person name="Strayer D.S."/>
            <person name="Jerng H.H."/>
            <person name="O'Connor K."/>
        </authorList>
    </citation>
    <scope>NUCLEOTIDE SEQUENCE [GENOMIC DNA]</scope>
</reference>
<reference key="3">
    <citation type="journal article" date="1999" name="J. Mol. Biol.">
        <title>Shope fibroma virus DNA topoisomerase catalyses holliday junction resolution and hairpin formation in vitro.</title>
        <authorList>
            <person name="Palaniyar N."/>
            <person name="Gerasimopoulos E."/>
            <person name="Evans D.H."/>
        </authorList>
    </citation>
    <scope>NUCLEOTIDE SEQUENCE [GENOMIC DNA]</scope>
</reference>
<reference key="4">
    <citation type="journal article" date="1999" name="Virology">
        <title>The complete genome sequence of shope (Rabbit) fibroma virus.</title>
        <authorList>
            <person name="Willer D.O."/>
            <person name="McFadden G."/>
            <person name="Evans D.H."/>
        </authorList>
    </citation>
    <scope>NUCLEOTIDE SEQUENCE [LARGE SCALE GENOMIC DNA]</scope>
</reference>
<feature type="chain" id="PRO_0000145213" description="DNA topoisomerase 1">
    <location>
        <begin position="1"/>
        <end position="314"/>
    </location>
</feature>
<feature type="domain" description="Topo IB-type catalytic" evidence="3">
    <location>
        <begin position="73"/>
        <end position="314"/>
    </location>
</feature>
<feature type="active site" description="O-(3'-phospho-DNA)-tyrosine intermediate" evidence="3 4">
    <location>
        <position position="273"/>
    </location>
</feature>
<feature type="site" description="Involved in religation" evidence="2">
    <location>
        <position position="167"/>
    </location>
</feature>
<keyword id="KW-0238">DNA-binding</keyword>
<keyword id="KW-0413">Isomerase</keyword>
<keyword id="KW-0426">Late protein</keyword>
<keyword id="KW-1185">Reference proteome</keyword>
<keyword id="KW-0799">Topoisomerase</keyword>
<organismHost>
    <name type="scientific">Oryctolagus cuniculus</name>
    <name type="common">Rabbit</name>
    <dbReference type="NCBI Taxonomy" id="9986"/>
</organismHost>
<proteinExistence type="inferred from homology"/>
<accession>P16472</accession>
<accession>Q77PC2</accession>
<protein>
    <recommendedName>
        <fullName>DNA topoisomerase 1</fullName>
        <ecNumber evidence="4">5.6.2.1</ecNumber>
    </recommendedName>
    <alternativeName>
        <fullName>DNA topoisomerase I</fullName>
    </alternativeName>
</protein>
<gene>
    <name type="primary">TOP1</name>
    <name type="ORF">s074R</name>
</gene>
<evidence type="ECO:0000250" key="1"/>
<evidence type="ECO:0000250" key="2">
    <source>
        <dbReference type="UniProtKB" id="P32989"/>
    </source>
</evidence>
<evidence type="ECO:0000255" key="3">
    <source>
        <dbReference type="PROSITE-ProRule" id="PRU01382"/>
    </source>
</evidence>
<evidence type="ECO:0000255" key="4">
    <source>
        <dbReference type="PROSITE-ProRule" id="PRU10130"/>
    </source>
</evidence>
<evidence type="ECO:0000305" key="5"/>
<comment type="function">
    <text evidence="1">Releases the supercoiling and torsional tension of DNA introduced during the DNA replication and transcription by transiently cleaving and rejoining one strand of the DNA duplex. Introduces a single-strand break via transesterification at a target site in duplex DNA. The scissile phosphodiester is attacked by the catalytic tyrosine of the enzyme, resulting in the formation of a DNA-(3'-phosphotyrosyl)-enzyme intermediate and the expulsion of a 5'-OH DNA strand. The free DNA strand then undergoes passage around the unbroken strand thus removing DNA supercoils. Finally, in the religation step, the DNA 5'-OH attacks the covalent intermediate to expel the active-site tyrosine and restore the DNA phosphodiester backbone (By similarity).</text>
</comment>
<comment type="catalytic activity">
    <reaction evidence="4">
        <text>ATP-independent breakage of single-stranded DNA, followed by passage and rejoining.</text>
        <dbReference type="EC" id="5.6.2.1"/>
    </reaction>
</comment>
<comment type="similarity">
    <text evidence="5">Belongs to the type IB topoisomerase family.</text>
</comment>
<dbReference type="EC" id="5.6.2.1" evidence="4"/>
<dbReference type="EMBL" id="M31723">
    <property type="protein sequence ID" value="AAA47228.1"/>
    <property type="molecule type" value="Genomic_DNA"/>
</dbReference>
<dbReference type="EMBL" id="AF170722">
    <property type="protein sequence ID" value="AAF17956.1"/>
    <property type="molecule type" value="Genomic_DNA"/>
</dbReference>
<dbReference type="PIR" id="A34769">
    <property type="entry name" value="ITVZKA"/>
</dbReference>
<dbReference type="RefSeq" id="NP_051963.1">
    <property type="nucleotide sequence ID" value="NC_001266.1"/>
</dbReference>
<dbReference type="SMR" id="P16472"/>
<dbReference type="KEGG" id="vg:1486917"/>
<dbReference type="Proteomes" id="UP000000868">
    <property type="component" value="Segment"/>
</dbReference>
<dbReference type="GO" id="GO:0003677">
    <property type="term" value="F:DNA binding"/>
    <property type="evidence" value="ECO:0007669"/>
    <property type="project" value="UniProtKB-KW"/>
</dbReference>
<dbReference type="GO" id="GO:0003917">
    <property type="term" value="F:DNA topoisomerase type I (single strand cut, ATP-independent) activity"/>
    <property type="evidence" value="ECO:0007669"/>
    <property type="project" value="UniProtKB-EC"/>
</dbReference>
<dbReference type="GO" id="GO:0006265">
    <property type="term" value="P:DNA topological change"/>
    <property type="evidence" value="ECO:0007669"/>
    <property type="project" value="InterPro"/>
</dbReference>
<dbReference type="Gene3D" id="3.30.66.10">
    <property type="entry name" value="DNA topoisomerase I domain"/>
    <property type="match status" value="1"/>
</dbReference>
<dbReference type="Gene3D" id="3.90.15.10">
    <property type="entry name" value="Topoisomerase I, Chain A, domain 3"/>
    <property type="match status" value="1"/>
</dbReference>
<dbReference type="Gene3D" id="1.20.120.380">
    <property type="entry name" value="Type 1-topoisomerase catalytic fragment, domain 2"/>
    <property type="match status" value="1"/>
</dbReference>
<dbReference type="InterPro" id="IPR011010">
    <property type="entry name" value="DNA_brk_join_enz"/>
</dbReference>
<dbReference type="InterPro" id="IPR035447">
    <property type="entry name" value="DNA_topo_I_N_sf"/>
</dbReference>
<dbReference type="InterPro" id="IPR001631">
    <property type="entry name" value="TopoI"/>
</dbReference>
<dbReference type="InterPro" id="IPR027362">
    <property type="entry name" value="TopoI_C"/>
</dbReference>
<dbReference type="InterPro" id="IPR014711">
    <property type="entry name" value="TopoI_cat_a-hlx-sub_euk"/>
</dbReference>
<dbReference type="InterPro" id="IPR013500">
    <property type="entry name" value="TopoI_cat_euk"/>
</dbReference>
<dbReference type="InterPro" id="IPR015346">
    <property type="entry name" value="TopoI_N_vir"/>
</dbReference>
<dbReference type="InterPro" id="IPR018521">
    <property type="entry name" value="TopoIB_AS"/>
</dbReference>
<dbReference type="Pfam" id="PF01028">
    <property type="entry name" value="Topoisom_I"/>
    <property type="match status" value="1"/>
</dbReference>
<dbReference type="Pfam" id="PF09266">
    <property type="entry name" value="VirDNA-topo-I_N"/>
    <property type="match status" value="1"/>
</dbReference>
<dbReference type="PRINTS" id="PR00416">
    <property type="entry name" value="EUTPISMRASEI"/>
</dbReference>
<dbReference type="SUPFAM" id="SSF56349">
    <property type="entry name" value="DNA breaking-rejoining enzymes"/>
    <property type="match status" value="1"/>
</dbReference>
<dbReference type="SUPFAM" id="SSF55869">
    <property type="entry name" value="DNA topoisomerase I domain"/>
    <property type="match status" value="1"/>
</dbReference>
<dbReference type="PROSITE" id="PS00176">
    <property type="entry name" value="TOPO_IB_1"/>
    <property type="match status" value="1"/>
</dbReference>
<dbReference type="PROSITE" id="PS52038">
    <property type="entry name" value="TOPO_IB_2"/>
    <property type="match status" value="1"/>
</dbReference>
<sequence length="314" mass="36999">MRAFTYKDGKLYEDKELTIPVHCSNPTYEILKHVKIPSHLTDVIVYEQTYEQSLSRLIFVGLDSKGRRQYFYGKMHVQRRNSARDTIFIKVHRVIDKIHKFIDDTIEHKNDVLFQLGVFMLMETSFFIRMGKVKYLKENDTVGLLTLKNKNIVRENRKILIHFVGKDKIIHNFTVHSSNRLYKPLLRLIGRKEPDSFLFHKLSEKKVYKAVQQFGIRLKDLRTYGVNYTFLYNFWTNVKSLNPIPPIKKMISTSIKQTADIVGHTPSISKRAYIANTVLEYLTHDSELINTIRDISFDEFIRLITDYITNTQTV</sequence>
<organism>
    <name type="scientific">Rabbit fibroma virus (strain Kasza)</name>
    <name type="common">RFV</name>
    <name type="synonym">Shope fibroma virus (strain Kasza)</name>
    <dbReference type="NCBI Taxonomy" id="10272"/>
    <lineage>
        <taxon>Viruses</taxon>
        <taxon>Varidnaviria</taxon>
        <taxon>Bamfordvirae</taxon>
        <taxon>Nucleocytoviricota</taxon>
        <taxon>Pokkesviricetes</taxon>
        <taxon>Chitovirales</taxon>
        <taxon>Poxviridae</taxon>
        <taxon>Chordopoxvirinae</taxon>
        <taxon>Leporipoxvirus</taxon>
        <taxon>Rabbit fibroma virus</taxon>
    </lineage>
</organism>
<name>TOP1_RFVKA</name>